<keyword id="KW-1185">Reference proteome</keyword>
<sequence>MFCSRAVVLLNNALKIAVMKNGDLSLIQLGLDKEKREITESVIAIYQSELNLLSDVVNLLVKRAVFHKQISSVDELTKLTTEIASYCADEFKKLNDKRNW</sequence>
<name>YO81_BPP2</name>
<dbReference type="EMBL" id="AF063097">
    <property type="protein sequence ID" value="AAD03303.1"/>
    <property type="molecule type" value="Genomic_DNA"/>
</dbReference>
<dbReference type="PIR" id="S33832">
    <property type="entry name" value="S33832"/>
</dbReference>
<dbReference type="RefSeq" id="NP_046792.1">
    <property type="nucleotide sequence ID" value="NC_001895.1"/>
</dbReference>
<dbReference type="SMR" id="Q06423"/>
<dbReference type="KEGG" id="vg:77440826"/>
<dbReference type="Proteomes" id="UP000009092">
    <property type="component" value="Genome"/>
</dbReference>
<dbReference type="InterPro" id="IPR035404">
    <property type="entry name" value="DUF5405"/>
</dbReference>
<dbReference type="Pfam" id="PF17399">
    <property type="entry name" value="DUF5405"/>
    <property type="match status" value="1"/>
</dbReference>
<gene>
    <name type="primary">ORF81</name>
</gene>
<organism>
    <name type="scientific">Escherichia phage P2</name>
    <name type="common">Bacteriophage P2</name>
    <dbReference type="NCBI Taxonomy" id="2905681"/>
    <lineage>
        <taxon>Viruses</taxon>
        <taxon>Duplodnaviria</taxon>
        <taxon>Heunggongvirae</taxon>
        <taxon>Uroviricota</taxon>
        <taxon>Caudoviricetes</taxon>
        <taxon>Peduoviridae</taxon>
        <taxon>Peduovirus</taxon>
        <taxon>Peduovirus P2</taxon>
    </lineage>
</organism>
<organismHost>
    <name type="scientific">Enterobacteriaceae</name>
    <dbReference type="NCBI Taxonomy" id="543"/>
</organismHost>
<feature type="chain" id="PRO_0000165267" description="Uncharacterized 11.3 kDa protein in GpA 5'region">
    <location>
        <begin position="1"/>
        <end position="100"/>
    </location>
</feature>
<proteinExistence type="predicted"/>
<protein>
    <recommendedName>
        <fullName>Uncharacterized 11.3 kDa protein in GpA 5'region</fullName>
    </recommendedName>
    <alternativeName>
        <fullName>ORF2</fullName>
    </alternativeName>
</protein>
<reference key="1">
    <citation type="journal article" date="1993" name="J. Mol. Biol.">
        <title>Studies of bacteriophage P2 DNA replication. The DNA sequence of the cis-acting gene A and ori region and construction of a P2 mini-chromosome.</title>
        <authorList>
            <person name="Liu Y."/>
            <person name="Saha S."/>
            <person name="Haggaard-Ljungquist E."/>
        </authorList>
    </citation>
    <scope>NUCLEOTIDE SEQUENCE [GENOMIC DNA]</scope>
</reference>
<accession>Q06423</accession>